<dbReference type="EC" id="6.3.2.8" evidence="1"/>
<dbReference type="EMBL" id="CP000767">
    <property type="protein sequence ID" value="EAT99853.1"/>
    <property type="molecule type" value="Genomic_DNA"/>
</dbReference>
<dbReference type="RefSeq" id="WP_011991966.1">
    <property type="nucleotide sequence ID" value="NC_009715.2"/>
</dbReference>
<dbReference type="SMR" id="A7GX33"/>
<dbReference type="STRING" id="360105.CCV52592_0985"/>
<dbReference type="KEGG" id="ccv:CCV52592_0985"/>
<dbReference type="HOGENOM" id="CLU_028104_2_2_7"/>
<dbReference type="OrthoDB" id="9804126at2"/>
<dbReference type="UniPathway" id="UPA00219"/>
<dbReference type="Proteomes" id="UP000006380">
    <property type="component" value="Chromosome"/>
</dbReference>
<dbReference type="GO" id="GO:0005737">
    <property type="term" value="C:cytoplasm"/>
    <property type="evidence" value="ECO:0007669"/>
    <property type="project" value="UniProtKB-SubCell"/>
</dbReference>
<dbReference type="GO" id="GO:0005524">
    <property type="term" value="F:ATP binding"/>
    <property type="evidence" value="ECO:0007669"/>
    <property type="project" value="UniProtKB-UniRule"/>
</dbReference>
<dbReference type="GO" id="GO:0008763">
    <property type="term" value="F:UDP-N-acetylmuramate-L-alanine ligase activity"/>
    <property type="evidence" value="ECO:0007669"/>
    <property type="project" value="UniProtKB-UniRule"/>
</dbReference>
<dbReference type="GO" id="GO:0051301">
    <property type="term" value="P:cell division"/>
    <property type="evidence" value="ECO:0007669"/>
    <property type="project" value="UniProtKB-KW"/>
</dbReference>
<dbReference type="GO" id="GO:0071555">
    <property type="term" value="P:cell wall organization"/>
    <property type="evidence" value="ECO:0007669"/>
    <property type="project" value="UniProtKB-KW"/>
</dbReference>
<dbReference type="GO" id="GO:0009252">
    <property type="term" value="P:peptidoglycan biosynthetic process"/>
    <property type="evidence" value="ECO:0007669"/>
    <property type="project" value="UniProtKB-UniRule"/>
</dbReference>
<dbReference type="GO" id="GO:0008360">
    <property type="term" value="P:regulation of cell shape"/>
    <property type="evidence" value="ECO:0007669"/>
    <property type="project" value="UniProtKB-KW"/>
</dbReference>
<dbReference type="Gene3D" id="3.90.190.20">
    <property type="entry name" value="Mur ligase, C-terminal domain"/>
    <property type="match status" value="1"/>
</dbReference>
<dbReference type="Gene3D" id="3.40.1190.10">
    <property type="entry name" value="Mur-like, catalytic domain"/>
    <property type="match status" value="1"/>
</dbReference>
<dbReference type="Gene3D" id="3.40.50.720">
    <property type="entry name" value="NAD(P)-binding Rossmann-like Domain"/>
    <property type="match status" value="1"/>
</dbReference>
<dbReference type="HAMAP" id="MF_00046">
    <property type="entry name" value="MurC"/>
    <property type="match status" value="1"/>
</dbReference>
<dbReference type="InterPro" id="IPR036565">
    <property type="entry name" value="Mur-like_cat_sf"/>
</dbReference>
<dbReference type="InterPro" id="IPR004101">
    <property type="entry name" value="Mur_ligase_C"/>
</dbReference>
<dbReference type="InterPro" id="IPR036615">
    <property type="entry name" value="Mur_ligase_C_dom_sf"/>
</dbReference>
<dbReference type="InterPro" id="IPR013221">
    <property type="entry name" value="Mur_ligase_cen"/>
</dbReference>
<dbReference type="InterPro" id="IPR000713">
    <property type="entry name" value="Mur_ligase_N"/>
</dbReference>
<dbReference type="InterPro" id="IPR050061">
    <property type="entry name" value="MurCDEF_pg_biosynth"/>
</dbReference>
<dbReference type="InterPro" id="IPR005758">
    <property type="entry name" value="UDP-N-AcMur_Ala_ligase_MurC"/>
</dbReference>
<dbReference type="NCBIfam" id="TIGR01082">
    <property type="entry name" value="murC"/>
    <property type="match status" value="1"/>
</dbReference>
<dbReference type="PANTHER" id="PTHR43445:SF3">
    <property type="entry name" value="UDP-N-ACETYLMURAMATE--L-ALANINE LIGASE"/>
    <property type="match status" value="1"/>
</dbReference>
<dbReference type="PANTHER" id="PTHR43445">
    <property type="entry name" value="UDP-N-ACETYLMURAMATE--L-ALANINE LIGASE-RELATED"/>
    <property type="match status" value="1"/>
</dbReference>
<dbReference type="Pfam" id="PF01225">
    <property type="entry name" value="Mur_ligase"/>
    <property type="match status" value="1"/>
</dbReference>
<dbReference type="Pfam" id="PF02875">
    <property type="entry name" value="Mur_ligase_C"/>
    <property type="match status" value="1"/>
</dbReference>
<dbReference type="Pfam" id="PF08245">
    <property type="entry name" value="Mur_ligase_M"/>
    <property type="match status" value="1"/>
</dbReference>
<dbReference type="SUPFAM" id="SSF51984">
    <property type="entry name" value="MurCD N-terminal domain"/>
    <property type="match status" value="1"/>
</dbReference>
<dbReference type="SUPFAM" id="SSF53623">
    <property type="entry name" value="MurD-like peptide ligases, catalytic domain"/>
    <property type="match status" value="1"/>
</dbReference>
<dbReference type="SUPFAM" id="SSF53244">
    <property type="entry name" value="MurD-like peptide ligases, peptide-binding domain"/>
    <property type="match status" value="1"/>
</dbReference>
<sequence>MKKVHFIGIGGIGISAIARFLFEKGHKISGSDIKESKTTQELKEQGMDVITPHCKEAIKDQDFVVYSAAIKDDNVELVEARKKGIKCFSRKEILPYVLEDKRVFAVAGAHGKSTTSAMLSSLIEGSVIIGAISKQFGSNMRYAQSDNVVFEADESDSSFLNSNPYLAVVTNAEPEHMEHYDYDLAKFYAAYKGFLERAKVRVINAEDEFLSTLKLDAIRLFPSSDITELAMVVRDYQPYTSFNLKNLGKFEVFGMGQHIAIDASLAILAALHETPLKDIRENLLNFKGIKKRFDILSADKNFILIDDYAHHPTEIRATLNSVFEYAKLLGVSNVTAIFQPHRYTRLSTNLEGFKECFKGVDELVILPVYAAGEKPIEVDMKGAFSEYSPIFTDKVERVGEAIEFTDEFGVKNRLSDGIVVGFGAGDISVQLRGGY</sequence>
<organism>
    <name type="scientific">Campylobacter curvus (strain 525.92)</name>
    <dbReference type="NCBI Taxonomy" id="360105"/>
    <lineage>
        <taxon>Bacteria</taxon>
        <taxon>Pseudomonadati</taxon>
        <taxon>Campylobacterota</taxon>
        <taxon>Epsilonproteobacteria</taxon>
        <taxon>Campylobacterales</taxon>
        <taxon>Campylobacteraceae</taxon>
        <taxon>Campylobacter</taxon>
    </lineage>
</organism>
<protein>
    <recommendedName>
        <fullName evidence="1">UDP-N-acetylmuramate--L-alanine ligase</fullName>
        <ecNumber evidence="1">6.3.2.8</ecNumber>
    </recommendedName>
    <alternativeName>
        <fullName evidence="1">UDP-N-acetylmuramoyl-L-alanine synthetase</fullName>
    </alternativeName>
</protein>
<feature type="chain" id="PRO_1000004328" description="UDP-N-acetylmuramate--L-alanine ligase">
    <location>
        <begin position="1"/>
        <end position="435"/>
    </location>
</feature>
<feature type="binding site" evidence="1">
    <location>
        <begin position="108"/>
        <end position="114"/>
    </location>
    <ligand>
        <name>ATP</name>
        <dbReference type="ChEBI" id="CHEBI:30616"/>
    </ligand>
</feature>
<keyword id="KW-0067">ATP-binding</keyword>
<keyword id="KW-0131">Cell cycle</keyword>
<keyword id="KW-0132">Cell division</keyword>
<keyword id="KW-0133">Cell shape</keyword>
<keyword id="KW-0961">Cell wall biogenesis/degradation</keyword>
<keyword id="KW-0963">Cytoplasm</keyword>
<keyword id="KW-0436">Ligase</keyword>
<keyword id="KW-0547">Nucleotide-binding</keyword>
<keyword id="KW-0573">Peptidoglycan synthesis</keyword>
<keyword id="KW-1185">Reference proteome</keyword>
<evidence type="ECO:0000255" key="1">
    <source>
        <dbReference type="HAMAP-Rule" id="MF_00046"/>
    </source>
</evidence>
<proteinExistence type="inferred from homology"/>
<accession>A7GX33</accession>
<name>MURC_CAMC5</name>
<reference key="1">
    <citation type="submission" date="2007-07" db="EMBL/GenBank/DDBJ databases">
        <title>Genome sequence of Campylobacter curvus 525.92 isolated from human feces.</title>
        <authorList>
            <person name="Fouts D.E."/>
            <person name="Mongodin E.F."/>
            <person name="Puiu D."/>
            <person name="Sebastian Y."/>
            <person name="Miller W.G."/>
            <person name="Mandrell R.E."/>
            <person name="Lastovica A.J."/>
            <person name="Nelson K.E."/>
        </authorList>
    </citation>
    <scope>NUCLEOTIDE SEQUENCE [LARGE SCALE GENOMIC DNA]</scope>
    <source>
        <strain>525.92</strain>
    </source>
</reference>
<gene>
    <name evidence="1" type="primary">murC</name>
    <name type="ordered locus">Ccur92_04710</name>
    <name type="ORF">CCV52592_0985</name>
</gene>
<comment type="function">
    <text evidence="1">Cell wall formation.</text>
</comment>
<comment type="catalytic activity">
    <reaction evidence="1">
        <text>UDP-N-acetyl-alpha-D-muramate + L-alanine + ATP = UDP-N-acetyl-alpha-D-muramoyl-L-alanine + ADP + phosphate + H(+)</text>
        <dbReference type="Rhea" id="RHEA:23372"/>
        <dbReference type="ChEBI" id="CHEBI:15378"/>
        <dbReference type="ChEBI" id="CHEBI:30616"/>
        <dbReference type="ChEBI" id="CHEBI:43474"/>
        <dbReference type="ChEBI" id="CHEBI:57972"/>
        <dbReference type="ChEBI" id="CHEBI:70757"/>
        <dbReference type="ChEBI" id="CHEBI:83898"/>
        <dbReference type="ChEBI" id="CHEBI:456216"/>
        <dbReference type="EC" id="6.3.2.8"/>
    </reaction>
</comment>
<comment type="pathway">
    <text evidence="1">Cell wall biogenesis; peptidoglycan biosynthesis.</text>
</comment>
<comment type="subcellular location">
    <subcellularLocation>
        <location evidence="1">Cytoplasm</location>
    </subcellularLocation>
</comment>
<comment type="similarity">
    <text evidence="1">Belongs to the MurCDEF family.</text>
</comment>